<name>RECX_CLOTE</name>
<accession>Q891N2</accession>
<proteinExistence type="inferred from homology"/>
<feature type="chain" id="PRO_0000162424" description="Regulatory protein RecX">
    <location>
        <begin position="1"/>
        <end position="216"/>
    </location>
</feature>
<keyword id="KW-0963">Cytoplasm</keyword>
<keyword id="KW-1185">Reference proteome</keyword>
<dbReference type="EMBL" id="AE015927">
    <property type="protein sequence ID" value="AAO36813.1"/>
    <property type="molecule type" value="Genomic_DNA"/>
</dbReference>
<dbReference type="RefSeq" id="WP_011100474.1">
    <property type="nucleotide sequence ID" value="NC_004557.1"/>
</dbReference>
<dbReference type="SMR" id="Q891N2"/>
<dbReference type="STRING" id="212717.CTC_02337"/>
<dbReference type="GeneID" id="24252833"/>
<dbReference type="KEGG" id="ctc:CTC_02337"/>
<dbReference type="HOGENOM" id="CLU_066607_4_1_9"/>
<dbReference type="OrthoDB" id="5421057at2"/>
<dbReference type="Proteomes" id="UP000001412">
    <property type="component" value="Chromosome"/>
</dbReference>
<dbReference type="GO" id="GO:0005737">
    <property type="term" value="C:cytoplasm"/>
    <property type="evidence" value="ECO:0007669"/>
    <property type="project" value="UniProtKB-SubCell"/>
</dbReference>
<dbReference type="GO" id="GO:0006282">
    <property type="term" value="P:regulation of DNA repair"/>
    <property type="evidence" value="ECO:0007669"/>
    <property type="project" value="UniProtKB-UniRule"/>
</dbReference>
<dbReference type="Gene3D" id="1.10.10.10">
    <property type="entry name" value="Winged helix-like DNA-binding domain superfamily/Winged helix DNA-binding domain"/>
    <property type="match status" value="3"/>
</dbReference>
<dbReference type="HAMAP" id="MF_01114">
    <property type="entry name" value="RecX"/>
    <property type="match status" value="1"/>
</dbReference>
<dbReference type="InterPro" id="IPR053926">
    <property type="entry name" value="RecX_HTH_1st"/>
</dbReference>
<dbReference type="InterPro" id="IPR053924">
    <property type="entry name" value="RecX_HTH_2nd"/>
</dbReference>
<dbReference type="InterPro" id="IPR053925">
    <property type="entry name" value="RecX_HTH_3rd"/>
</dbReference>
<dbReference type="InterPro" id="IPR003783">
    <property type="entry name" value="Regulatory_RecX"/>
</dbReference>
<dbReference type="InterPro" id="IPR036388">
    <property type="entry name" value="WH-like_DNA-bd_sf"/>
</dbReference>
<dbReference type="NCBIfam" id="NF001058">
    <property type="entry name" value="PRK00117.4-1"/>
    <property type="match status" value="1"/>
</dbReference>
<dbReference type="PANTHER" id="PTHR33602">
    <property type="entry name" value="REGULATORY PROTEIN RECX FAMILY PROTEIN"/>
    <property type="match status" value="1"/>
</dbReference>
<dbReference type="PANTHER" id="PTHR33602:SF1">
    <property type="entry name" value="REGULATORY PROTEIN RECX FAMILY PROTEIN"/>
    <property type="match status" value="1"/>
</dbReference>
<dbReference type="Pfam" id="PF21982">
    <property type="entry name" value="RecX_HTH1"/>
    <property type="match status" value="1"/>
</dbReference>
<dbReference type="Pfam" id="PF02631">
    <property type="entry name" value="RecX_HTH2"/>
    <property type="match status" value="1"/>
</dbReference>
<dbReference type="Pfam" id="PF21981">
    <property type="entry name" value="RecX_HTH3"/>
    <property type="match status" value="1"/>
</dbReference>
<reference key="1">
    <citation type="journal article" date="2003" name="Proc. Natl. Acad. Sci. U.S.A.">
        <title>The genome sequence of Clostridium tetani, the causative agent of tetanus disease.</title>
        <authorList>
            <person name="Brueggemann H."/>
            <person name="Baeumer S."/>
            <person name="Fricke W.F."/>
            <person name="Wiezer A."/>
            <person name="Liesegang H."/>
            <person name="Decker I."/>
            <person name="Herzberg C."/>
            <person name="Martinez-Arias R."/>
            <person name="Merkl R."/>
            <person name="Henne A."/>
            <person name="Gottschalk G."/>
        </authorList>
    </citation>
    <scope>NUCLEOTIDE SEQUENCE [LARGE SCALE GENOMIC DNA]</scope>
    <source>
        <strain>Massachusetts / E88</strain>
    </source>
</reference>
<comment type="function">
    <text evidence="1">Modulates RecA activity.</text>
</comment>
<comment type="subcellular location">
    <subcellularLocation>
        <location evidence="1">Cytoplasm</location>
    </subcellularLocation>
</comment>
<comment type="similarity">
    <text evidence="1">Belongs to the RecX family.</text>
</comment>
<evidence type="ECO:0000255" key="1">
    <source>
        <dbReference type="HAMAP-Rule" id="MF_01114"/>
    </source>
</evidence>
<protein>
    <recommendedName>
        <fullName evidence="1">Regulatory protein RecX</fullName>
    </recommendedName>
</protein>
<sequence>MDNTSKINKITKIEVQKRNKKRVNLYINDEYAMAFSTELAFKHNLKIGQEVDYKELKVIAEEDNYIKCKGDALKFIEKSYKTERQVYDKLLSKGYDNKTIERVIDFLTEYKFIDDWRFGELYIEERLKREGRNKIKYSLMQKGISESIIDEKLNCVDRDKEKDALNKIAEKKYKSILKNEEDKTKIYNKLGRFLMSKGYLWEDVKSVLNKLLYSDG</sequence>
<gene>
    <name evidence="1" type="primary">recX</name>
    <name type="ordered locus">CTC_02337</name>
</gene>
<organism>
    <name type="scientific">Clostridium tetani (strain Massachusetts / E88)</name>
    <dbReference type="NCBI Taxonomy" id="212717"/>
    <lineage>
        <taxon>Bacteria</taxon>
        <taxon>Bacillati</taxon>
        <taxon>Bacillota</taxon>
        <taxon>Clostridia</taxon>
        <taxon>Eubacteriales</taxon>
        <taxon>Clostridiaceae</taxon>
        <taxon>Clostridium</taxon>
    </lineage>
</organism>